<gene>
    <name type="primary">otud5</name>
</gene>
<protein>
    <recommendedName>
        <fullName>OTU domain-containing protein 5</fullName>
        <ecNumber evidence="2">3.4.19.12</ecNumber>
    </recommendedName>
    <alternativeName>
        <fullName>Deubiquitinating enzyme A</fullName>
        <shortName>DUBA</shortName>
    </alternativeName>
</protein>
<organism>
    <name type="scientific">Xenopus tropicalis</name>
    <name type="common">Western clawed frog</name>
    <name type="synonym">Silurana tropicalis</name>
    <dbReference type="NCBI Taxonomy" id="8364"/>
    <lineage>
        <taxon>Eukaryota</taxon>
        <taxon>Metazoa</taxon>
        <taxon>Chordata</taxon>
        <taxon>Craniata</taxon>
        <taxon>Vertebrata</taxon>
        <taxon>Euteleostomi</taxon>
        <taxon>Amphibia</taxon>
        <taxon>Batrachia</taxon>
        <taxon>Anura</taxon>
        <taxon>Pipoidea</taxon>
        <taxon>Pipidae</taxon>
        <taxon>Xenopodinae</taxon>
        <taxon>Xenopus</taxon>
        <taxon>Silurana</taxon>
    </lineage>
</organism>
<feature type="chain" id="PRO_0000278229" description="OTU domain-containing protein 5">
    <location>
        <begin position="1"/>
        <end position="518"/>
    </location>
</feature>
<feature type="domain" description="OTU" evidence="4">
    <location>
        <begin position="171"/>
        <end position="294"/>
    </location>
</feature>
<feature type="region of interest" description="Disordered" evidence="5">
    <location>
        <begin position="1"/>
        <end position="79"/>
    </location>
</feature>
<feature type="region of interest" description="Disordered" evidence="5">
    <location>
        <begin position="105"/>
        <end position="144"/>
    </location>
</feature>
<feature type="region of interest" description="Cys-loop" evidence="1">
    <location>
        <begin position="176"/>
        <end position="182"/>
    </location>
</feature>
<feature type="region of interest" description="Variable-loop" evidence="1">
    <location>
        <begin position="231"/>
        <end position="241"/>
    </location>
</feature>
<feature type="region of interest" description="His-loop" evidence="1">
    <location>
        <begin position="282"/>
        <end position="287"/>
    </location>
</feature>
<feature type="region of interest" description="Disordered" evidence="5">
    <location>
        <begin position="371"/>
        <end position="450"/>
    </location>
</feature>
<feature type="compositionally biased region" description="Pro residues" evidence="5">
    <location>
        <begin position="39"/>
        <end position="53"/>
    </location>
</feature>
<feature type="compositionally biased region" description="Low complexity" evidence="5">
    <location>
        <begin position="116"/>
        <end position="125"/>
    </location>
</feature>
<feature type="compositionally biased region" description="Low complexity" evidence="5">
    <location>
        <begin position="377"/>
        <end position="390"/>
    </location>
</feature>
<feature type="active site" evidence="3">
    <location>
        <position position="179"/>
    </location>
</feature>
<feature type="active site" description="Nucleophile" evidence="2">
    <location>
        <position position="182"/>
    </location>
</feature>
<feature type="active site" evidence="2">
    <location>
        <position position="287"/>
    </location>
</feature>
<evidence type="ECO:0000250" key="1"/>
<evidence type="ECO:0000250" key="2">
    <source>
        <dbReference type="UniProtKB" id="Q96G74"/>
    </source>
</evidence>
<evidence type="ECO:0000255" key="3"/>
<evidence type="ECO:0000255" key="4">
    <source>
        <dbReference type="PROSITE-ProRule" id="PRU00139"/>
    </source>
</evidence>
<evidence type="ECO:0000256" key="5">
    <source>
        <dbReference type="SAM" id="MobiDB-lite"/>
    </source>
</evidence>
<evidence type="ECO:0000305" key="6"/>
<comment type="function">
    <text evidence="2">Deubiquitinating enzyme that may function as negative regulator of the innate immune system. Has peptidase activity towards 'Lys-48'- and 'Lys-63'-linked polyubiquitin chains. Can also cleave 'Lys-11'-linked ubiquitin chains (in vitro) (By similarity).</text>
</comment>
<comment type="catalytic activity">
    <reaction>
        <text>Thiol-dependent hydrolysis of ester, thioester, amide, peptide and isopeptide bonds formed by the C-terminal Gly of ubiquitin (a 76-residue protein attached to proteins as an intracellular targeting signal).</text>
        <dbReference type="EC" id="3.4.19.12"/>
    </reaction>
</comment>
<comment type="similarity">
    <text evidence="6">Belongs to the peptidase C85 family.</text>
</comment>
<proteinExistence type="evidence at transcript level"/>
<sequence length="518" mass="56332">MTILPKKKPPPPSDPEGNGERSGSGGADSHSRSGARPRSSPPPRWAYPGNPAPPERHPAGTPRPQQASPPPCSGGSGGAGSGPLGEGALGPCCCCTGAGGCCSGPGHSKRRRQGVSAGPGAPGSSPDREDGAGNNSEDEYETAARTQAIDPDTAEQQEHWFEKALQEKKGFIIKQMKEDGACLFRAVADQVYGDQDMHEVVRKHCMDYLMKNADYFSNYVTEDFTTYINRKRKNNCHGNHIEMQAMAEMYNRPVEVYQYGTEPINTFHGIQQNEDEPIRVSYHRNIHYNSVVNPNKATIGVGLGLPSFKPGFAEQSLMKSAIRTSEESWIEQQMLEDKKRATDWEATNEAIEEQVARESYLQWLRDQEKQARQPRKASATCSSATAAASSGLEEWSGRSPRQRSTAGSPEHPDLHAELCMKPPSPAATLMLGKPPSPCAPGPSNQTCAGADRATSPLVSLYPALECRAIMQHMSPTAFGLKDWDDDEILASVLAVSQQEYLDTIKKSTLRRDSSPDHS</sequence>
<dbReference type="EC" id="3.4.19.12" evidence="2"/>
<dbReference type="EMBL" id="BC074667">
    <property type="protein sequence ID" value="AAH74667.1"/>
    <property type="molecule type" value="mRNA"/>
</dbReference>
<dbReference type="RefSeq" id="NP_001004849.1">
    <property type="nucleotide sequence ID" value="NM_001004849.1"/>
</dbReference>
<dbReference type="SMR" id="Q6GL44"/>
<dbReference type="FunCoup" id="Q6GL44">
    <property type="interactions" value="3499"/>
</dbReference>
<dbReference type="MEROPS" id="C85.001"/>
<dbReference type="GeneID" id="448134"/>
<dbReference type="KEGG" id="xtr:448134"/>
<dbReference type="AGR" id="Xenbase:XB-GENE-6455884"/>
<dbReference type="CTD" id="55593"/>
<dbReference type="Xenbase" id="XB-GENE-6455884">
    <property type="gene designation" value="otud5"/>
</dbReference>
<dbReference type="eggNOG" id="KOG2605">
    <property type="taxonomic scope" value="Eukaryota"/>
</dbReference>
<dbReference type="InParanoid" id="Q6GL44"/>
<dbReference type="OMA" id="NKMHRDP"/>
<dbReference type="OrthoDB" id="409956at2759"/>
<dbReference type="Proteomes" id="UP000008143">
    <property type="component" value="Chromosome 8"/>
</dbReference>
<dbReference type="GO" id="GO:0004843">
    <property type="term" value="F:cysteine-type deubiquitinase activity"/>
    <property type="evidence" value="ECO:0000250"/>
    <property type="project" value="UniProtKB"/>
</dbReference>
<dbReference type="GO" id="GO:0071108">
    <property type="term" value="P:protein K48-linked deubiquitination"/>
    <property type="evidence" value="ECO:0000250"/>
    <property type="project" value="UniProtKB"/>
</dbReference>
<dbReference type="GO" id="GO:0070536">
    <property type="term" value="P:protein K63-linked deubiquitination"/>
    <property type="evidence" value="ECO:0000250"/>
    <property type="project" value="UniProtKB"/>
</dbReference>
<dbReference type="GO" id="GO:0006508">
    <property type="term" value="P:proteolysis"/>
    <property type="evidence" value="ECO:0007669"/>
    <property type="project" value="UniProtKB-KW"/>
</dbReference>
<dbReference type="GO" id="GO:0032496">
    <property type="term" value="P:response to lipopolysaccharide"/>
    <property type="evidence" value="ECO:0000250"/>
    <property type="project" value="UniProtKB"/>
</dbReference>
<dbReference type="CDD" id="cd22752">
    <property type="entry name" value="OTU_OTUD5-like"/>
    <property type="match status" value="1"/>
</dbReference>
<dbReference type="FunFam" id="3.90.70.80:FF:000002">
    <property type="entry name" value="OTU domain-containing protein 5 isoform X2"/>
    <property type="match status" value="1"/>
</dbReference>
<dbReference type="Gene3D" id="3.90.70.80">
    <property type="match status" value="1"/>
</dbReference>
<dbReference type="InterPro" id="IPR003323">
    <property type="entry name" value="OTU_dom"/>
</dbReference>
<dbReference type="InterPro" id="IPR038765">
    <property type="entry name" value="Papain-like_cys_pep_sf"/>
</dbReference>
<dbReference type="InterPro" id="IPR050704">
    <property type="entry name" value="Peptidase_C85-like"/>
</dbReference>
<dbReference type="PANTHER" id="PTHR12419">
    <property type="entry name" value="OTU DOMAIN CONTAINING PROTEIN"/>
    <property type="match status" value="1"/>
</dbReference>
<dbReference type="PANTHER" id="PTHR12419:SF4">
    <property type="entry name" value="OTU DOMAIN-CONTAINING PROTEIN 5"/>
    <property type="match status" value="1"/>
</dbReference>
<dbReference type="Pfam" id="PF02338">
    <property type="entry name" value="OTU"/>
    <property type="match status" value="1"/>
</dbReference>
<dbReference type="SUPFAM" id="SSF54001">
    <property type="entry name" value="Cysteine proteinases"/>
    <property type="match status" value="1"/>
</dbReference>
<dbReference type="PROSITE" id="PS50802">
    <property type="entry name" value="OTU"/>
    <property type="match status" value="1"/>
</dbReference>
<keyword id="KW-0378">Hydrolase</keyword>
<keyword id="KW-0645">Protease</keyword>
<keyword id="KW-1185">Reference proteome</keyword>
<keyword id="KW-0788">Thiol protease</keyword>
<keyword id="KW-0833">Ubl conjugation pathway</keyword>
<name>OTUD5_XENTR</name>
<reference key="1">
    <citation type="submission" date="2004-06" db="EMBL/GenBank/DDBJ databases">
        <authorList>
            <consortium name="NIH - Xenopus Gene Collection (XGC) project"/>
        </authorList>
    </citation>
    <scope>NUCLEOTIDE SEQUENCE [LARGE SCALE MRNA]</scope>
    <source>
        <tissue>Embryo</tissue>
    </source>
</reference>
<accession>Q6GL44</accession>